<sequence>MQRRRRAPPASQPAQDSGHSEEVEVQFSAGRLGSAAPAGPPVRGTAEDEERLEREHFWKVINAFRYYGTSMHERVNRTERQFRSLPDNQQKLLPQFPLHLDKIRKCVDHNQEILLTIVNDCIHMFENKEYGEDANGKIMPASTFDMDKLKSTLKQFVRDWSGTGKAERDACYKPIIKEIIKNFPKERWDPSKVNILVPGAGLGRLAWEIAMLGYACQGNEWSFFMLFSSNFVLNRCSEVDKYKLYPWIHQFSNNRRSADQIRPIFFPDVDPHSLPPGSNFSMTAGDFQEIYSECNTWDCIATCFFIDTAHNVIDYIDTIWRILKPGGIWINLGPLLYHFENLANELSIELSYEDIKNVVLQYGFQLEVEKESVLSTYTVNDLSMMKYYYECVLFVVRKPQ</sequence>
<comment type="function">
    <text evidence="3">N-methyltransferase that catalyzes the formation of anserine (beta-alanyl-N(Pi)-methyl-L-histidine) from carnosine. Anserine, a methylated derivative of carnosine (beta-alanyl-L-histidine), is an abundant constituent of vertebrate skeletal muscles. Also methylates other L-histidine-containing di- and tripeptides such as Gly-Gly-His, Gly-His and homocarnosine (GABA-His).</text>
</comment>
<comment type="catalytic activity">
    <reaction evidence="3">
        <text>carnosine + S-adenosyl-L-methionine = anserine + S-adenosyl-L-homocysteine + H(+)</text>
        <dbReference type="Rhea" id="RHEA:14205"/>
        <dbReference type="ChEBI" id="CHEBI:15378"/>
        <dbReference type="ChEBI" id="CHEBI:57485"/>
        <dbReference type="ChEBI" id="CHEBI:57856"/>
        <dbReference type="ChEBI" id="CHEBI:58445"/>
        <dbReference type="ChEBI" id="CHEBI:59789"/>
        <dbReference type="EC" id="2.1.1.22"/>
    </reaction>
</comment>
<comment type="biophysicochemical properties">
    <kinetics>
        <KM evidence="3">3.33 mM for carnosine</KM>
        <KM evidence="3">0.042 mM for S-adenosyl-L-methionine</KM>
        <Vmax evidence="3">2.93 nmol/min/mg enzyme with carnosine as substrate</Vmax>
        <text evidence="3">kcat is 0.15 min(-1) for carnosine. kcat is 4.69 min(-1) for S-adenosyl-L-methionine.</text>
    </kinetics>
    <phDependence>
        <text evidence="3">Optimum pH is 7.0-7.5.</text>
    </phDependence>
    <temperatureDependence>
        <text evidence="3">Optimum temperature is 50 degrees Celsius.</text>
    </temperatureDependence>
</comment>
<comment type="subunit">
    <text evidence="1">Homodimer. Each monomer accommodates one molecule of carnosine in its active pocket, precisely anchoring the histidine imidazole ring such that only N1 is exposed and deprotonated for methylation.</text>
</comment>
<comment type="subcellular location">
    <subcellularLocation>
        <location evidence="3">Cytoplasm</location>
        <location evidence="3">Cytosol</location>
    </subcellularLocation>
    <subcellularLocation>
        <location evidence="3">Nucleus</location>
    </subcellularLocation>
</comment>
<comment type="tissue specificity">
    <text evidence="3">Expressed at higher level in skeletal muscle compared to other tissues.</text>
</comment>
<comment type="domain">
    <text evidence="1">The Gly-Xaa-Gly-Xaa-Gly (GXGXG) motif binds the adenosyl part of S-adenosyl-L-methionine.</text>
</comment>
<comment type="domain">
    <text evidence="1">The carnosine-binding region forms hydrophobic and hydrogen bonds with carnosine, defining a flipping orientation of the imidazole ring so that N1 is present next to S-adenosyl-L-methionine for methylation.</text>
</comment>
<comment type="similarity">
    <text evidence="5">Belongs to the carnosine N-methyltransferase family.</text>
</comment>
<feature type="chain" id="PRO_0000089687" description="Carnosine N-methyltransferase">
    <location>
        <begin position="1"/>
        <end position="400"/>
    </location>
</feature>
<feature type="region of interest" description="Disordered" evidence="2">
    <location>
        <begin position="1"/>
        <end position="49"/>
    </location>
</feature>
<feature type="binding site" evidence="1">
    <location>
        <position position="155"/>
    </location>
    <ligand>
        <name>S-adenosyl-L-methionine</name>
        <dbReference type="ChEBI" id="CHEBI:59789"/>
    </ligand>
</feature>
<feature type="binding site" evidence="1">
    <location>
        <position position="158"/>
    </location>
    <ligand>
        <name>S-adenosyl-L-methionine</name>
        <dbReference type="ChEBI" id="CHEBI:59789"/>
    </ligand>
</feature>
<feature type="binding site" evidence="1">
    <location>
        <position position="199"/>
    </location>
    <ligand>
        <name>S-adenosyl-L-methionine</name>
        <dbReference type="ChEBI" id="CHEBI:59789"/>
    </ligand>
</feature>
<feature type="binding site" evidence="1">
    <location>
        <position position="220"/>
    </location>
    <ligand>
        <name>S-adenosyl-L-methionine</name>
        <dbReference type="ChEBI" id="CHEBI:59789"/>
    </ligand>
</feature>
<feature type="binding site" evidence="1">
    <location>
        <position position="286"/>
    </location>
    <ligand>
        <name>S-adenosyl-L-methionine</name>
        <dbReference type="ChEBI" id="CHEBI:59789"/>
    </ligand>
</feature>
<feature type="binding site" evidence="1">
    <location>
        <position position="287"/>
    </location>
    <ligand>
        <name>S-adenosyl-L-methionine</name>
        <dbReference type="ChEBI" id="CHEBI:59789"/>
    </ligand>
</feature>
<feature type="binding site" evidence="1">
    <location>
        <position position="303"/>
    </location>
    <ligand>
        <name>S-adenosyl-L-methionine</name>
        <dbReference type="ChEBI" id="CHEBI:59789"/>
    </ligand>
</feature>
<feature type="binding site" evidence="1">
    <location>
        <position position="307"/>
    </location>
    <ligand>
        <name>carnosine</name>
        <dbReference type="ChEBI" id="CHEBI:57485"/>
    </ligand>
</feature>
<feature type="binding site" evidence="1">
    <location>
        <position position="315"/>
    </location>
    <ligand>
        <name>S-adenosyl-L-methionine</name>
        <dbReference type="ChEBI" id="CHEBI:59789"/>
    </ligand>
</feature>
<feature type="binding site" evidence="1">
    <location>
        <position position="338"/>
    </location>
    <ligand>
        <name>carnosine</name>
        <dbReference type="ChEBI" id="CHEBI:57485"/>
    </ligand>
</feature>
<feature type="binding site" evidence="1">
    <location>
        <position position="389"/>
    </location>
    <ligand>
        <name>carnosine</name>
        <dbReference type="ChEBI" id="CHEBI:57485"/>
    </ligand>
</feature>
<reference key="1">
    <citation type="journal article" date="2004" name="Genome Res.">
        <title>The status, quality, and expansion of the NIH full-length cDNA project: the Mammalian Gene Collection (MGC).</title>
        <authorList>
            <consortium name="The MGC Project Team"/>
        </authorList>
    </citation>
    <scope>NUCLEOTIDE SEQUENCE [LARGE SCALE MRNA]</scope>
    <source>
        <tissue>Thymus</tissue>
    </source>
</reference>
<reference key="2">
    <citation type="journal article" date="2015" name="J. Biol. Chem.">
        <title>UPF0586 protein C9orf41 homolog is anserine-producing methyltransferase.</title>
        <authorList>
            <person name="Drozak J."/>
            <person name="Piecuch M."/>
            <person name="Poleszak O."/>
            <person name="Kozlowski P."/>
            <person name="Chrobok L."/>
            <person name="Baelde H.J."/>
            <person name="de Heer E."/>
        </authorList>
    </citation>
    <scope>IDENTIFICATION BY MASS SPECTROMETRY</scope>
    <scope>FUNCTION</scope>
    <scope>CATALYTIC ACTIVITY</scope>
    <scope>BIOPHYSICOCHEMICAL PROPERTIES</scope>
    <scope>SUBCELLULAR LOCATION</scope>
    <scope>TISSUE SPECIFICITY</scope>
</reference>
<organism>
    <name type="scientific">Rattus norvegicus</name>
    <name type="common">Rat</name>
    <dbReference type="NCBI Taxonomy" id="10116"/>
    <lineage>
        <taxon>Eukaryota</taxon>
        <taxon>Metazoa</taxon>
        <taxon>Chordata</taxon>
        <taxon>Craniata</taxon>
        <taxon>Vertebrata</taxon>
        <taxon>Euteleostomi</taxon>
        <taxon>Mammalia</taxon>
        <taxon>Eutheria</taxon>
        <taxon>Euarchontoglires</taxon>
        <taxon>Glires</taxon>
        <taxon>Rodentia</taxon>
        <taxon>Myomorpha</taxon>
        <taxon>Muroidea</taxon>
        <taxon>Muridae</taxon>
        <taxon>Murinae</taxon>
        <taxon>Rattus</taxon>
    </lineage>
</organism>
<proteinExistence type="evidence at protein level"/>
<evidence type="ECO:0000250" key="1">
    <source>
        <dbReference type="UniProtKB" id="Q8N4J0"/>
    </source>
</evidence>
<evidence type="ECO:0000256" key="2">
    <source>
        <dbReference type="SAM" id="MobiDB-lite"/>
    </source>
</evidence>
<evidence type="ECO:0000269" key="3">
    <source>
    </source>
</evidence>
<evidence type="ECO:0000303" key="4">
    <source>
    </source>
</evidence>
<evidence type="ECO:0000305" key="5"/>
<evidence type="ECO:0000312" key="6">
    <source>
        <dbReference type="RGD" id="1311863"/>
    </source>
</evidence>
<protein>
    <recommendedName>
        <fullName evidence="4 5 6">Carnosine N-methyltransferase</fullName>
        <ecNumber evidence="3">2.1.1.22</ecNumber>
    </recommendedName>
    <alternativeName>
        <fullName evidence="4">Anserine-producing methyltransferase</fullName>
    </alternativeName>
</protein>
<keyword id="KW-0963">Cytoplasm</keyword>
<keyword id="KW-0489">Methyltransferase</keyword>
<keyword id="KW-0539">Nucleus</keyword>
<keyword id="KW-1185">Reference proteome</keyword>
<keyword id="KW-0949">S-adenosyl-L-methionine</keyword>
<keyword id="KW-0808">Transferase</keyword>
<name>CARME_RAT</name>
<gene>
    <name evidence="6" type="primary">Carnmt1</name>
</gene>
<accession>Q5BJZ6</accession>
<dbReference type="EC" id="2.1.1.22" evidence="3"/>
<dbReference type="EMBL" id="BC091268">
    <property type="protein sequence ID" value="AAH91268.1"/>
    <property type="molecule type" value="mRNA"/>
</dbReference>
<dbReference type="RefSeq" id="NP_001020145.1">
    <property type="nucleotide sequence ID" value="NM_001024974.1"/>
</dbReference>
<dbReference type="SMR" id="Q5BJZ6"/>
<dbReference type="FunCoup" id="Q5BJZ6">
    <property type="interactions" value="1632"/>
</dbReference>
<dbReference type="STRING" id="10116.ENSRNOP00000017405"/>
<dbReference type="iPTMnet" id="Q5BJZ6"/>
<dbReference type="PhosphoSitePlus" id="Q5BJZ6"/>
<dbReference type="PaxDb" id="10116-ENSRNOP00000017405"/>
<dbReference type="GeneID" id="293871"/>
<dbReference type="KEGG" id="rno:293871"/>
<dbReference type="UCSC" id="RGD:1311863">
    <property type="organism name" value="rat"/>
</dbReference>
<dbReference type="AGR" id="RGD:1311863"/>
<dbReference type="CTD" id="138199"/>
<dbReference type="RGD" id="1311863">
    <property type="gene designation" value="Carnmt1"/>
</dbReference>
<dbReference type="eggNOG" id="KOG2798">
    <property type="taxonomic scope" value="Eukaryota"/>
</dbReference>
<dbReference type="HOGENOM" id="CLU_030612_0_1_1"/>
<dbReference type="InParanoid" id="Q5BJZ6"/>
<dbReference type="OrthoDB" id="978at2759"/>
<dbReference type="PhylomeDB" id="Q5BJZ6"/>
<dbReference type="TreeFam" id="TF313564"/>
<dbReference type="BRENDA" id="2.1.1.22">
    <property type="organism ID" value="5301"/>
</dbReference>
<dbReference type="Reactome" id="R-RNO-70921">
    <property type="pathway name" value="Histidine catabolism"/>
</dbReference>
<dbReference type="SABIO-RK" id="Q5BJZ6"/>
<dbReference type="PRO" id="PR:Q5BJZ6"/>
<dbReference type="Proteomes" id="UP000002494">
    <property type="component" value="Unplaced"/>
</dbReference>
<dbReference type="GO" id="GO:0005829">
    <property type="term" value="C:cytosol"/>
    <property type="evidence" value="ECO:0000314"/>
    <property type="project" value="UniProtKB"/>
</dbReference>
<dbReference type="GO" id="GO:0005634">
    <property type="term" value="C:nucleus"/>
    <property type="evidence" value="ECO:0000314"/>
    <property type="project" value="UniProtKB"/>
</dbReference>
<dbReference type="GO" id="GO:0030735">
    <property type="term" value="F:carnosine N-methyltransferase activity"/>
    <property type="evidence" value="ECO:0000314"/>
    <property type="project" value="UniProtKB"/>
</dbReference>
<dbReference type="GO" id="GO:0042803">
    <property type="term" value="F:protein homodimerization activity"/>
    <property type="evidence" value="ECO:0000250"/>
    <property type="project" value="UniProtKB"/>
</dbReference>
<dbReference type="GO" id="GO:0008757">
    <property type="term" value="F:S-adenosylmethionine-dependent methyltransferase activity"/>
    <property type="evidence" value="ECO:0000266"/>
    <property type="project" value="RGD"/>
</dbReference>
<dbReference type="GO" id="GO:0035498">
    <property type="term" value="P:carnosine metabolic process"/>
    <property type="evidence" value="ECO:0000314"/>
    <property type="project" value="UniProtKB"/>
</dbReference>
<dbReference type="GO" id="GO:0032259">
    <property type="term" value="P:methylation"/>
    <property type="evidence" value="ECO:0007669"/>
    <property type="project" value="UniProtKB-KW"/>
</dbReference>
<dbReference type="FunFam" id="3.40.50.150:FF:000094">
    <property type="entry name" value="Carnosine N-methyltransferase 1"/>
    <property type="match status" value="1"/>
</dbReference>
<dbReference type="Gene3D" id="3.40.50.150">
    <property type="entry name" value="Vaccinia Virus protein VP39"/>
    <property type="match status" value="1"/>
</dbReference>
<dbReference type="InterPro" id="IPR012901">
    <property type="entry name" value="CARME"/>
</dbReference>
<dbReference type="InterPro" id="IPR029063">
    <property type="entry name" value="SAM-dependent_MTases_sf"/>
</dbReference>
<dbReference type="PANTHER" id="PTHR12303">
    <property type="entry name" value="CARNOSINE N-METHYLTRANSFERASE"/>
    <property type="match status" value="1"/>
</dbReference>
<dbReference type="PANTHER" id="PTHR12303:SF6">
    <property type="entry name" value="CARNOSINE N-METHYLTRANSFERASE"/>
    <property type="match status" value="1"/>
</dbReference>
<dbReference type="Pfam" id="PF07942">
    <property type="entry name" value="CARME"/>
    <property type="match status" value="1"/>
</dbReference>
<dbReference type="SMART" id="SM01296">
    <property type="entry name" value="N2227"/>
    <property type="match status" value="1"/>
</dbReference>
<dbReference type="SUPFAM" id="SSF53335">
    <property type="entry name" value="S-adenosyl-L-methionine-dependent methyltransferases"/>
    <property type="match status" value="1"/>
</dbReference>